<dbReference type="EMBL" id="AF108144">
    <property type="protein sequence ID" value="AAC99415.1"/>
    <property type="molecule type" value="Genomic_DNA"/>
</dbReference>
<dbReference type="EMBL" id="AF065404">
    <property type="protein sequence ID" value="AAD32417.1"/>
    <property type="molecule type" value="Genomic_DNA"/>
</dbReference>
<dbReference type="EMBL" id="AE011190">
    <property type="protein sequence ID" value="AAM26102.1"/>
    <property type="molecule type" value="Genomic_DNA"/>
</dbReference>
<dbReference type="EMBL" id="AE017336">
    <property type="protein sequence ID" value="AAT28898.2"/>
    <property type="molecule type" value="Genomic_DNA"/>
</dbReference>
<dbReference type="EMBL" id="AJ413932">
    <property type="protein sequence ID" value="CAC93927.1"/>
    <property type="molecule type" value="Genomic_DNA"/>
</dbReference>
<dbReference type="EMBL" id="AJ413933">
    <property type="protein sequence ID" value="CAC93930.1"/>
    <property type="molecule type" value="Genomic_DNA"/>
</dbReference>
<dbReference type="PIR" id="A59105">
    <property type="entry name" value="A59105"/>
</dbReference>
<dbReference type="RefSeq" id="NP_052809.1">
    <property type="nucleotide sequence ID" value="NC_001496.1"/>
</dbReference>
<dbReference type="RefSeq" id="WP_000831868.1">
    <property type="nucleotide sequence ID" value="NZ_VTZH01000015.1"/>
</dbReference>
<dbReference type="SMR" id="Q9ZFB4"/>
<dbReference type="GeneID" id="45025509"/>
<dbReference type="KEGG" id="banh:HYU01_28750"/>
<dbReference type="KEGG" id="bar:GBAA_pXO1_0157"/>
<dbReference type="HOGENOM" id="CLU_021639_4_1_9"/>
<dbReference type="OMA" id="FIYCEEL"/>
<dbReference type="Proteomes" id="UP000000594">
    <property type="component" value="Plasmid pXO1"/>
</dbReference>
<dbReference type="GO" id="GO:0005886">
    <property type="term" value="C:plasma membrane"/>
    <property type="evidence" value="ECO:0007669"/>
    <property type="project" value="UniProtKB-SubCell"/>
</dbReference>
<dbReference type="GO" id="GO:0009847">
    <property type="term" value="P:spore germination"/>
    <property type="evidence" value="ECO:0007669"/>
    <property type="project" value="InterPro"/>
</dbReference>
<dbReference type="InterPro" id="IPR004995">
    <property type="entry name" value="Spore_Ger"/>
</dbReference>
<dbReference type="InterPro" id="IPR050768">
    <property type="entry name" value="UPF0353/GerABKA_families"/>
</dbReference>
<dbReference type="PANTHER" id="PTHR22550:SF5">
    <property type="entry name" value="LEUCINE ZIPPER PROTEIN 4"/>
    <property type="match status" value="1"/>
</dbReference>
<dbReference type="PANTHER" id="PTHR22550">
    <property type="entry name" value="SPORE GERMINATION PROTEIN"/>
    <property type="match status" value="1"/>
</dbReference>
<dbReference type="Pfam" id="PF03323">
    <property type="entry name" value="GerA"/>
    <property type="match status" value="1"/>
</dbReference>
<dbReference type="PIRSF" id="PIRSF005690">
    <property type="entry name" value="GerBA"/>
    <property type="match status" value="1"/>
</dbReference>
<geneLocation type="plasmid">
    <name>pXO1</name>
</geneLocation>
<feature type="chain" id="PRO_0000164018" description="Spore germination protein XA">
    <location>
        <begin position="1"/>
        <end position="492"/>
    </location>
</feature>
<feature type="transmembrane region" description="Helical" evidence="1">
    <location>
        <begin position="246"/>
        <end position="266"/>
    </location>
</feature>
<feature type="transmembrane region" description="Helical" evidence="1">
    <location>
        <begin position="285"/>
        <end position="305"/>
    </location>
</feature>
<feature type="transmembrane region" description="Helical" evidence="1">
    <location>
        <begin position="325"/>
        <end position="345"/>
    </location>
</feature>
<feature type="transmembrane region" description="Helical" evidence="1">
    <location>
        <begin position="353"/>
        <end position="373"/>
    </location>
</feature>
<feature type="transmembrane region" description="Helical" evidence="1">
    <location>
        <begin position="377"/>
        <end position="397"/>
    </location>
</feature>
<feature type="transmembrane region" description="Helical" evidence="1">
    <location>
        <begin position="413"/>
        <end position="433"/>
    </location>
</feature>
<feature type="transmembrane region" description="Helical" evidence="1">
    <location>
        <begin position="442"/>
        <end position="462"/>
    </location>
</feature>
<accession>Q9ZFB4</accession>
<evidence type="ECO:0000255" key="1"/>
<evidence type="ECO:0000305" key="2"/>
<organism>
    <name type="scientific">Bacillus anthracis</name>
    <dbReference type="NCBI Taxonomy" id="1392"/>
    <lineage>
        <taxon>Bacteria</taxon>
        <taxon>Bacillati</taxon>
        <taxon>Bacillota</taxon>
        <taxon>Bacilli</taxon>
        <taxon>Bacillales</taxon>
        <taxon>Bacillaceae</taxon>
        <taxon>Bacillus</taxon>
        <taxon>Bacillus cereus group</taxon>
    </lineage>
</organism>
<reference key="1">
    <citation type="journal article" date="1999" name="Mol. Microbiol.">
        <title>Identification and characterization of a germination operon on the virulence plasmid pXO1 of Bacillus anthracis.</title>
        <authorList>
            <person name="Guidi-Rontani C."/>
            <person name="Pereira Y."/>
            <person name="Ruffie S."/>
            <person name="Sirard J.-C."/>
            <person name="Weber-Levy M."/>
            <person name="Mock M."/>
        </authorList>
    </citation>
    <scope>NUCLEOTIDE SEQUENCE [GENOMIC DNA]</scope>
    <source>
        <strain>Sterne</strain>
    </source>
</reference>
<reference key="2">
    <citation type="journal article" date="1999" name="J. Bacteriol.">
        <title>Sequence and organization of pXO1, the large Bacillus anthracis plasmid harboring the anthrax toxin genes.</title>
        <authorList>
            <person name="Okinaka R.T."/>
            <person name="Cloud K."/>
            <person name="Hampton O."/>
            <person name="Hoffmaster A.R."/>
            <person name="Hill K.K."/>
            <person name="Keim P."/>
            <person name="Koehler T.M."/>
            <person name="Lamke G."/>
            <person name="Kumano S."/>
            <person name="Mahillon J."/>
            <person name="Manter D."/>
            <person name="Martinez Y."/>
            <person name="Ricke D."/>
            <person name="Svensson R."/>
            <person name="Jackson P.J."/>
        </authorList>
    </citation>
    <scope>NUCLEOTIDE SEQUENCE [LARGE SCALE GENOMIC DNA]</scope>
    <source>
        <strain>Sterne</strain>
    </source>
</reference>
<reference key="3">
    <citation type="journal article" date="2002" name="Science">
        <title>Comparative genome sequencing for discovery of novel polymorphisms in Bacillus anthracis.</title>
        <authorList>
            <person name="Read T.D."/>
            <person name="Salzberg S.L."/>
            <person name="Pop M."/>
            <person name="Shumway M.F."/>
            <person name="Umayam L."/>
            <person name="Jiang L."/>
            <person name="Holtzapple E."/>
            <person name="Busch J.D."/>
            <person name="Smith K.L."/>
            <person name="Schupp J.M."/>
            <person name="Solomon D."/>
            <person name="Keim P."/>
            <person name="Fraser C.M."/>
        </authorList>
    </citation>
    <scope>NUCLEOTIDE SEQUENCE [GENOMIC DNA]</scope>
    <source>
        <strain>Ames / isolate Florida / A2012</strain>
    </source>
</reference>
<reference key="4">
    <citation type="journal article" date="2009" name="J. Bacteriol.">
        <title>The complete genome sequence of Bacillus anthracis Ames 'Ancestor'.</title>
        <authorList>
            <person name="Ravel J."/>
            <person name="Jiang L."/>
            <person name="Stanley S.T."/>
            <person name="Wilson M.R."/>
            <person name="Decker R.S."/>
            <person name="Read T.D."/>
            <person name="Worsham P."/>
            <person name="Keim P.S."/>
            <person name="Salzberg S.L."/>
            <person name="Fraser-Liggett C.M."/>
            <person name="Rasko D.A."/>
        </authorList>
    </citation>
    <scope>NUCLEOTIDE SEQUENCE [LARGE SCALE GENOMIC DNA]</scope>
    <source>
        <strain>Ames ancestor</strain>
    </source>
</reference>
<reference key="5">
    <citation type="journal article" date="2002" name="J. Appl. Microbiol.">
        <title>Sequence analysis of the genes encoding for the major virulence factors of Bacillus anthracis vaccine strain 'Carbosap'.</title>
        <authorList>
            <person name="Adone R."/>
            <person name="Pasquali P."/>
            <person name="La Rosa G."/>
            <person name="Marianelli C."/>
            <person name="Muscillo M."/>
            <person name="Fasanella A."/>
            <person name="Francia M."/>
            <person name="Ciuchini F."/>
        </authorList>
    </citation>
    <scope>NUCLEOTIDE SEQUENCE [GENOMIC DNA]</scope>
    <source>
        <strain>Carbosap</strain>
        <strain>Ferrara</strain>
    </source>
</reference>
<sequence length="492" mass="55142">MKRTVEVNESILRVWFEGCKDVKIMNRKWCADTTTTTILLVYCQHVIDHTKLKQAIAPEMCNDLLQSSFKDSNLLASNSQFSVTTLELENSNENVSRMLFEGKLLIIFQEYKRGYTIDIAKLPTRSIEQSNTEMTIRGSRDGFVEELSTNIGLIRKRLKTSSLSYDEFIIGERTQTKVGLLYLKDVASQETISQVQFKLKEINIDGVVSSAQIEEFITGDQFSLFPLIEYTGRPDYAVNCLLHGRFILLVDGSPTATIAPVSFPFFVNTAEDQNYFYLFGSFVRLLSLFGIAISIFLPGFWVALVTYHPDQIPYTLLATLSLSREGIPFPAPLEGMIMITLFELLRQAGLRIPAAFGQTLSVVGGLIIGQAAISSGFVSPSMVVMIAISVVSTFTLVNQSFTGTLSILRYGVFLMSSFLGIVGFICSILLIVIHVANLRSFGLPFLAPYSPPVFSSMLPSTFRIPFTRMKKRPKELHTYDNTRQRTNNDENK</sequence>
<name>GERXA_BACAN</name>
<protein>
    <recommendedName>
        <fullName>Spore germination protein XA</fullName>
    </recommendedName>
</protein>
<proteinExistence type="evidence at transcript level"/>
<keyword id="KW-1003">Cell membrane</keyword>
<keyword id="KW-0309">Germination</keyword>
<keyword id="KW-0472">Membrane</keyword>
<keyword id="KW-0614">Plasmid</keyword>
<keyword id="KW-1185">Reference proteome</keyword>
<keyword id="KW-0812">Transmembrane</keyword>
<keyword id="KW-1133">Transmembrane helix</keyword>
<keyword id="KW-0843">Virulence</keyword>
<gene>
    <name type="primary">gerXA</name>
    <name type="ordered locus">pXO1-113</name>
    <name type="ordered locus">BXA0157</name>
    <name type="ordered locus">GBAA_pXO1_0157</name>
</gene>
<comment type="function">
    <text>May allow B.anthracis to germinate within phagocytic cells and therefore involved in virulence.</text>
</comment>
<comment type="subcellular location">
    <subcellularLocation>
        <location evidence="2">Cell membrane</location>
        <topology evidence="2">Multi-pass membrane protein</topology>
    </subcellularLocation>
</comment>
<comment type="developmental stage">
    <text>Transcription is restricted to the sporulation phase.</text>
</comment>
<comment type="similarity">
    <text evidence="2">Belongs to the GerABKA family.</text>
</comment>